<reference key="1">
    <citation type="journal article" date="2009" name="PLoS ONE">
        <title>Genome sequence of the pathogenic intestinal spirochete Brachyspira hyodysenteriae reveals adaptations to its lifestyle in the porcine large intestine.</title>
        <authorList>
            <person name="Bellgard M.I."/>
            <person name="Wanchanthuek P."/>
            <person name="La T."/>
            <person name="Ryan K."/>
            <person name="Moolhuijzen P."/>
            <person name="Albertyn Z."/>
            <person name="Shaban B."/>
            <person name="Motro Y."/>
            <person name="Dunn D.S."/>
            <person name="Schibeci D."/>
            <person name="Hunter A."/>
            <person name="Barrero R."/>
            <person name="Phillips N.D."/>
            <person name="Hampson D.J."/>
        </authorList>
    </citation>
    <scope>NUCLEOTIDE SEQUENCE [LARGE SCALE GENOMIC DNA]</scope>
    <source>
        <strain>ATCC 49526 / WA1</strain>
    </source>
</reference>
<accession>C0QVG4</accession>
<organism>
    <name type="scientific">Brachyspira hyodysenteriae (strain ATCC 49526 / WA1)</name>
    <dbReference type="NCBI Taxonomy" id="565034"/>
    <lineage>
        <taxon>Bacteria</taxon>
        <taxon>Pseudomonadati</taxon>
        <taxon>Spirochaetota</taxon>
        <taxon>Spirochaetia</taxon>
        <taxon>Brachyspirales</taxon>
        <taxon>Brachyspiraceae</taxon>
        <taxon>Brachyspira</taxon>
    </lineage>
</organism>
<feature type="chain" id="PRO_1000200127" description="UPF0102 protein BHWA1_02005">
    <location>
        <begin position="1"/>
        <end position="121"/>
    </location>
</feature>
<gene>
    <name type="ordered locus">BHWA1_02005</name>
</gene>
<protein>
    <recommendedName>
        <fullName evidence="1">UPF0102 protein BHWA1_02005</fullName>
    </recommendedName>
</protein>
<proteinExistence type="inferred from homology"/>
<comment type="similarity">
    <text evidence="1">Belongs to the UPF0102 family.</text>
</comment>
<dbReference type="EMBL" id="CP001357">
    <property type="protein sequence ID" value="ACN84465.1"/>
    <property type="molecule type" value="Genomic_DNA"/>
</dbReference>
<dbReference type="RefSeq" id="WP_012671504.1">
    <property type="nucleotide sequence ID" value="NC_012225.1"/>
</dbReference>
<dbReference type="SMR" id="C0QVG4"/>
<dbReference type="STRING" id="565034.BHWA1_02005"/>
<dbReference type="GeneID" id="63963158"/>
<dbReference type="KEGG" id="bhy:BHWA1_02005"/>
<dbReference type="eggNOG" id="COG0792">
    <property type="taxonomic scope" value="Bacteria"/>
</dbReference>
<dbReference type="HOGENOM" id="CLU_115353_1_1_12"/>
<dbReference type="Proteomes" id="UP000001803">
    <property type="component" value="Chromosome"/>
</dbReference>
<dbReference type="GO" id="GO:0003676">
    <property type="term" value="F:nucleic acid binding"/>
    <property type="evidence" value="ECO:0007669"/>
    <property type="project" value="InterPro"/>
</dbReference>
<dbReference type="CDD" id="cd20736">
    <property type="entry name" value="PoNe_Nuclease"/>
    <property type="match status" value="1"/>
</dbReference>
<dbReference type="Gene3D" id="3.40.1350.10">
    <property type="match status" value="1"/>
</dbReference>
<dbReference type="HAMAP" id="MF_00048">
    <property type="entry name" value="UPF0102"/>
    <property type="match status" value="1"/>
</dbReference>
<dbReference type="InterPro" id="IPR011335">
    <property type="entry name" value="Restrct_endonuc-II-like"/>
</dbReference>
<dbReference type="InterPro" id="IPR011856">
    <property type="entry name" value="tRNA_endonuc-like_dom_sf"/>
</dbReference>
<dbReference type="InterPro" id="IPR003509">
    <property type="entry name" value="UPF0102_YraN-like"/>
</dbReference>
<dbReference type="NCBIfam" id="NF009150">
    <property type="entry name" value="PRK12497.1-3"/>
    <property type="match status" value="1"/>
</dbReference>
<dbReference type="NCBIfam" id="TIGR00252">
    <property type="entry name" value="YraN family protein"/>
    <property type="match status" value="1"/>
</dbReference>
<dbReference type="PANTHER" id="PTHR34039">
    <property type="entry name" value="UPF0102 PROTEIN YRAN"/>
    <property type="match status" value="1"/>
</dbReference>
<dbReference type="PANTHER" id="PTHR34039:SF1">
    <property type="entry name" value="UPF0102 PROTEIN YRAN"/>
    <property type="match status" value="1"/>
</dbReference>
<dbReference type="Pfam" id="PF02021">
    <property type="entry name" value="UPF0102"/>
    <property type="match status" value="1"/>
</dbReference>
<dbReference type="SUPFAM" id="SSF52980">
    <property type="entry name" value="Restriction endonuclease-like"/>
    <property type="match status" value="1"/>
</dbReference>
<evidence type="ECO:0000255" key="1">
    <source>
        <dbReference type="HAMAP-Rule" id="MF_00048"/>
    </source>
</evidence>
<name>Y2005_BRAHW</name>
<sequence>MANKKIIGNLGEDIALEYLEKLGYTLIERNFKGKKTRGEIDLVMTKGVVIVFIEVKYRRQGSFGYAACSISDRKKKKLYETAEEYLIEKGLSFNQKCSFGAVLIDDTHYNREISFIEDIFI</sequence>